<gene>
    <name type="primary">ACVR2A</name>
    <name type="synonym">ACTRII</name>
    <name type="synonym">ACVR2</name>
</gene>
<proteinExistence type="evidence at transcript level"/>
<reference key="1">
    <citation type="submission" date="1996-03" db="EMBL/GenBank/DDBJ databases">
        <authorList>
            <person name="Tisdall D.J."/>
        </authorList>
    </citation>
    <scope>NUCLEOTIDE SEQUENCE [MRNA]</scope>
    <source>
        <strain>Romney</strain>
        <tissue>Ovarian follicle</tissue>
    </source>
</reference>
<dbReference type="EC" id="2.7.11.30" evidence="3"/>
<dbReference type="EMBL" id="L19442">
    <property type="protein sequence ID" value="AAA91903.1"/>
    <property type="molecule type" value="mRNA"/>
</dbReference>
<dbReference type="RefSeq" id="NP_001009293.1">
    <property type="nucleotide sequence ID" value="NM_001009293.1"/>
</dbReference>
<dbReference type="SMR" id="Q28560"/>
<dbReference type="STRING" id="9940.ENSOARP00000010557"/>
<dbReference type="GlyCosmos" id="Q28560">
    <property type="glycosylation" value="2 sites, No reported glycans"/>
</dbReference>
<dbReference type="PaxDb" id="9940-ENSOARP00000010557"/>
<dbReference type="GeneID" id="443304"/>
<dbReference type="KEGG" id="oas:443304"/>
<dbReference type="CTD" id="92"/>
<dbReference type="eggNOG" id="KOG3653">
    <property type="taxonomic scope" value="Eukaryota"/>
</dbReference>
<dbReference type="OrthoDB" id="547665at2759"/>
<dbReference type="Proteomes" id="UP000002356">
    <property type="component" value="Unplaced"/>
</dbReference>
<dbReference type="GO" id="GO:0048179">
    <property type="term" value="C:activin receptor complex"/>
    <property type="evidence" value="ECO:0007669"/>
    <property type="project" value="TreeGrafter"/>
</dbReference>
<dbReference type="GO" id="GO:0005886">
    <property type="term" value="C:plasma membrane"/>
    <property type="evidence" value="ECO:0000250"/>
    <property type="project" value="UniProtKB"/>
</dbReference>
<dbReference type="GO" id="GO:0048185">
    <property type="term" value="F:activin binding"/>
    <property type="evidence" value="ECO:0007669"/>
    <property type="project" value="TreeGrafter"/>
</dbReference>
<dbReference type="GO" id="GO:0017002">
    <property type="term" value="F:activin receptor activity"/>
    <property type="evidence" value="ECO:0000250"/>
    <property type="project" value="UniProtKB"/>
</dbReference>
<dbReference type="GO" id="GO:0005524">
    <property type="term" value="F:ATP binding"/>
    <property type="evidence" value="ECO:0007669"/>
    <property type="project" value="UniProtKB-KW"/>
</dbReference>
<dbReference type="GO" id="GO:0098821">
    <property type="term" value="F:BMP receptor activity"/>
    <property type="evidence" value="ECO:0000250"/>
    <property type="project" value="UniProtKB"/>
</dbReference>
<dbReference type="GO" id="GO:0046872">
    <property type="term" value="F:metal ion binding"/>
    <property type="evidence" value="ECO:0007669"/>
    <property type="project" value="UniProtKB-KW"/>
</dbReference>
<dbReference type="GO" id="GO:0030509">
    <property type="term" value="P:BMP signaling pathway"/>
    <property type="evidence" value="ECO:0000250"/>
    <property type="project" value="UniProtKB"/>
</dbReference>
<dbReference type="CDD" id="cd23631">
    <property type="entry name" value="TFP_LU_ECD_ACVR2A"/>
    <property type="match status" value="1"/>
</dbReference>
<dbReference type="FunFam" id="1.10.510.10:FF:000099">
    <property type="entry name" value="Serine/threonine-protein kinase receptor"/>
    <property type="match status" value="1"/>
</dbReference>
<dbReference type="FunFam" id="2.10.60.10:FF:000002">
    <property type="entry name" value="Serine/threonine-protein kinase receptor"/>
    <property type="match status" value="1"/>
</dbReference>
<dbReference type="FunFam" id="3.30.200.20:FF:000094">
    <property type="entry name" value="Serine/threonine-protein kinase receptor"/>
    <property type="match status" value="1"/>
</dbReference>
<dbReference type="Gene3D" id="2.10.60.10">
    <property type="entry name" value="CD59"/>
    <property type="match status" value="1"/>
</dbReference>
<dbReference type="Gene3D" id="3.30.200.20">
    <property type="entry name" value="Phosphorylase Kinase, domain 1"/>
    <property type="match status" value="1"/>
</dbReference>
<dbReference type="Gene3D" id="1.10.510.10">
    <property type="entry name" value="Transferase(Phosphotransferase) domain 1"/>
    <property type="match status" value="1"/>
</dbReference>
<dbReference type="InterPro" id="IPR011009">
    <property type="entry name" value="Kinase-like_dom_sf"/>
</dbReference>
<dbReference type="InterPro" id="IPR000719">
    <property type="entry name" value="Prot_kinase_dom"/>
</dbReference>
<dbReference type="InterPro" id="IPR008271">
    <property type="entry name" value="Ser/Thr_kinase_AS"/>
</dbReference>
<dbReference type="InterPro" id="IPR045860">
    <property type="entry name" value="Snake_toxin-like_sf"/>
</dbReference>
<dbReference type="InterPro" id="IPR000333">
    <property type="entry name" value="TGFB_receptor"/>
</dbReference>
<dbReference type="PANTHER" id="PTHR23255:SF64">
    <property type="entry name" value="ACTIVIN RECEPTOR TYPE-2A"/>
    <property type="match status" value="1"/>
</dbReference>
<dbReference type="PANTHER" id="PTHR23255">
    <property type="entry name" value="TRANSFORMING GROWTH FACTOR-BETA RECEPTOR TYPE I AND II"/>
    <property type="match status" value="1"/>
</dbReference>
<dbReference type="Pfam" id="PF00069">
    <property type="entry name" value="Pkinase"/>
    <property type="match status" value="1"/>
</dbReference>
<dbReference type="PRINTS" id="PR00653">
    <property type="entry name" value="ACTIVIN2R"/>
</dbReference>
<dbReference type="SMART" id="SM00220">
    <property type="entry name" value="S_TKc"/>
    <property type="match status" value="1"/>
</dbReference>
<dbReference type="SUPFAM" id="SSF56112">
    <property type="entry name" value="Protein kinase-like (PK-like)"/>
    <property type="match status" value="1"/>
</dbReference>
<dbReference type="SUPFAM" id="SSF57302">
    <property type="entry name" value="Snake toxin-like"/>
    <property type="match status" value="1"/>
</dbReference>
<dbReference type="PROSITE" id="PS50011">
    <property type="entry name" value="PROTEIN_KINASE_DOM"/>
    <property type="match status" value="1"/>
</dbReference>
<dbReference type="PROSITE" id="PS00108">
    <property type="entry name" value="PROTEIN_KINASE_ST"/>
    <property type="match status" value="1"/>
</dbReference>
<evidence type="ECO:0000250" key="1"/>
<evidence type="ECO:0000250" key="2">
    <source>
        <dbReference type="UniProtKB" id="P27037"/>
    </source>
</evidence>
<evidence type="ECO:0000250" key="3">
    <source>
        <dbReference type="UniProtKB" id="P27038"/>
    </source>
</evidence>
<evidence type="ECO:0000250" key="4">
    <source>
        <dbReference type="UniProtKB" id="P38445"/>
    </source>
</evidence>
<evidence type="ECO:0000255" key="5"/>
<evidence type="ECO:0000255" key="6">
    <source>
        <dbReference type="PROSITE-ProRule" id="PRU00159"/>
    </source>
</evidence>
<evidence type="ECO:0000255" key="7">
    <source>
        <dbReference type="PROSITE-ProRule" id="PRU10027"/>
    </source>
</evidence>
<evidence type="ECO:0000305" key="8"/>
<sequence length="513" mass="57768">MGAAAKLAFAVFLISCSSGAILGRSETQECIFYNANWERDRTNRTGVESCYGDKDKRRHCFATWKNISSSIDIVKQGCWLDDINCYDRTDCIEKKDSPEVYFCCCEGNMCNERFSYFPEMEVTQPTSNPVTPKPPYYNILLYSLVPLMLVAGIVICAFWVYRHHKMAYPPVLVPTQDPGPPPPSPLLGLKPLQLLEVKARGGFGCVWKAQLLNEYVAVKIFPIQDKQSWQNEYEVYSLPGMKHENILQFIGAEKRGTSVDVDLWLITAFHEKGSLSDFLKANVVSWNELCHIAETMARGLAYLHEDIPGLKDGHKPAISHRDIKSKNVLLKNNLTACIADFGLALKFEAGKSAGDTHGQVGTRRYMAPEVLEGAINFQRDAFLRIDMYAMGLVLWELASRCTAADGPVDEYMLPFVEEIGQHPSLEDMQEVVVHKKKRPVLRDYWQKLAGMAMLCETIEECWDHDAEARLSAGCVGERITQMQRLTNIITTEDIVTVVTVVTNVDFPPKESSL</sequence>
<name>AVR2A_SHEEP</name>
<keyword id="KW-0067">ATP-binding</keyword>
<keyword id="KW-1003">Cell membrane</keyword>
<keyword id="KW-1015">Disulfide bond</keyword>
<keyword id="KW-0325">Glycoprotein</keyword>
<keyword id="KW-0418">Kinase</keyword>
<keyword id="KW-0460">Magnesium</keyword>
<keyword id="KW-0464">Manganese</keyword>
<keyword id="KW-0472">Membrane</keyword>
<keyword id="KW-0479">Metal-binding</keyword>
<keyword id="KW-0547">Nucleotide-binding</keyword>
<keyword id="KW-0675">Receptor</keyword>
<keyword id="KW-1185">Reference proteome</keyword>
<keyword id="KW-0723">Serine/threonine-protein kinase</keyword>
<keyword id="KW-0732">Signal</keyword>
<keyword id="KW-0808">Transferase</keyword>
<keyword id="KW-0812">Transmembrane</keyword>
<keyword id="KW-1133">Transmembrane helix</keyword>
<feature type="signal peptide" evidence="5">
    <location>
        <begin position="1"/>
        <end position="19"/>
    </location>
</feature>
<feature type="chain" id="PRO_0000024400" description="Activin receptor type-2A">
    <location>
        <begin position="20"/>
        <end position="513"/>
    </location>
</feature>
<feature type="topological domain" description="Extracellular" evidence="5">
    <location>
        <begin position="20"/>
        <end position="135"/>
    </location>
</feature>
<feature type="transmembrane region" description="Helical" evidence="5">
    <location>
        <begin position="136"/>
        <end position="161"/>
    </location>
</feature>
<feature type="topological domain" description="Cytoplasmic" evidence="5">
    <location>
        <begin position="162"/>
        <end position="513"/>
    </location>
</feature>
<feature type="domain" description="Protein kinase" evidence="6">
    <location>
        <begin position="192"/>
        <end position="485"/>
    </location>
</feature>
<feature type="active site" description="Proton acceptor" evidence="6 7">
    <location>
        <position position="322"/>
    </location>
</feature>
<feature type="binding site" evidence="6">
    <location>
        <begin position="198"/>
        <end position="206"/>
    </location>
    <ligand>
        <name>ATP</name>
        <dbReference type="ChEBI" id="CHEBI:30616"/>
    </ligand>
</feature>
<feature type="binding site" evidence="6">
    <location>
        <position position="219"/>
    </location>
    <ligand>
        <name>ATP</name>
        <dbReference type="ChEBI" id="CHEBI:30616"/>
    </ligand>
</feature>
<feature type="glycosylation site" description="N-linked (GlcNAc...) asparagine" evidence="5">
    <location>
        <position position="43"/>
    </location>
</feature>
<feature type="glycosylation site" description="N-linked (GlcNAc...) asparagine" evidence="5">
    <location>
        <position position="66"/>
    </location>
</feature>
<feature type="disulfide bond" evidence="3">
    <location>
        <begin position="30"/>
        <end position="60"/>
    </location>
</feature>
<feature type="disulfide bond" evidence="4">
    <location>
        <begin position="50"/>
        <end position="78"/>
    </location>
</feature>
<feature type="disulfide bond" evidence="4">
    <location>
        <begin position="85"/>
        <end position="104"/>
    </location>
</feature>
<feature type="disulfide bond" evidence="4">
    <location>
        <begin position="91"/>
        <end position="103"/>
    </location>
</feature>
<feature type="disulfide bond" evidence="4">
    <location>
        <begin position="105"/>
        <end position="110"/>
    </location>
</feature>
<comment type="function">
    <text evidence="2 3">On ligand binding, forms a receptor complex consisting of two type II and two type I transmembrane serine/threonine kinases. Type II receptors phosphorylate and activate type I receptors which autophosphorylate, then bind and activate SMAD transcriptional regulators. Receptor for activin A, activin B and inhibin A. Mediates induction of adipogenesis by GDF6.</text>
</comment>
<comment type="catalytic activity">
    <reaction evidence="3">
        <text>L-threonyl-[receptor-protein] + ATP = O-phospho-L-threonyl-[receptor-protein] + ADP + H(+)</text>
        <dbReference type="Rhea" id="RHEA:44880"/>
        <dbReference type="Rhea" id="RHEA-COMP:11024"/>
        <dbReference type="Rhea" id="RHEA-COMP:11025"/>
        <dbReference type="ChEBI" id="CHEBI:15378"/>
        <dbReference type="ChEBI" id="CHEBI:30013"/>
        <dbReference type="ChEBI" id="CHEBI:30616"/>
        <dbReference type="ChEBI" id="CHEBI:61977"/>
        <dbReference type="ChEBI" id="CHEBI:456216"/>
        <dbReference type="EC" id="2.7.11.30"/>
    </reaction>
    <physiologicalReaction direction="left-to-right" evidence="3">
        <dbReference type="Rhea" id="RHEA:44881"/>
    </physiologicalReaction>
</comment>
<comment type="catalytic activity">
    <reaction evidence="3">
        <text>L-seryl-[receptor-protein] + ATP = O-phospho-L-seryl-[receptor-protein] + ADP + H(+)</text>
        <dbReference type="Rhea" id="RHEA:18673"/>
        <dbReference type="Rhea" id="RHEA-COMP:11022"/>
        <dbReference type="Rhea" id="RHEA-COMP:11023"/>
        <dbReference type="ChEBI" id="CHEBI:15378"/>
        <dbReference type="ChEBI" id="CHEBI:29999"/>
        <dbReference type="ChEBI" id="CHEBI:30616"/>
        <dbReference type="ChEBI" id="CHEBI:83421"/>
        <dbReference type="ChEBI" id="CHEBI:456216"/>
        <dbReference type="EC" id="2.7.11.30"/>
    </reaction>
    <physiologicalReaction direction="left-to-right" evidence="3">
        <dbReference type="Rhea" id="RHEA:18674"/>
    </physiologicalReaction>
</comment>
<comment type="cofactor">
    <cofactor evidence="1">
        <name>Mg(2+)</name>
        <dbReference type="ChEBI" id="CHEBI:18420"/>
    </cofactor>
    <cofactor evidence="1">
        <name>Mn(2+)</name>
        <dbReference type="ChEBI" id="CHEBI:29035"/>
    </cofactor>
</comment>
<comment type="subunit">
    <text evidence="2 3">Part of a complex consisting of MAGI2/ARIP1, ACVR2A, ACVR1B and SMAD3 (By similarity). Interacts with MAGI2/ARIP1 (By similarity). Interacts with type I receptor ACVR1 (By similarity). Interacts with TSC22D1/TSC-22 (By similarity). Interacts with activin A/INHBA (By similarity).</text>
</comment>
<comment type="subcellular location">
    <subcellularLocation>
        <location evidence="3">Cell membrane</location>
        <topology evidence="5">Single-pass type I membrane protein</topology>
    </subcellularLocation>
</comment>
<comment type="similarity">
    <text evidence="8">Belongs to the protein kinase superfamily. TKL Ser/Thr protein kinase family. TGFB receptor subfamily.</text>
</comment>
<protein>
    <recommendedName>
        <fullName evidence="3">Activin receptor type-2A</fullName>
        <ecNumber evidence="3">2.7.11.30</ecNumber>
    </recommendedName>
    <alternativeName>
        <fullName>Activin receptor type IIA</fullName>
        <shortName>ACTR-IIA</shortName>
    </alternativeName>
</protein>
<organism>
    <name type="scientific">Ovis aries</name>
    <name type="common">Sheep</name>
    <dbReference type="NCBI Taxonomy" id="9940"/>
    <lineage>
        <taxon>Eukaryota</taxon>
        <taxon>Metazoa</taxon>
        <taxon>Chordata</taxon>
        <taxon>Craniata</taxon>
        <taxon>Vertebrata</taxon>
        <taxon>Euteleostomi</taxon>
        <taxon>Mammalia</taxon>
        <taxon>Eutheria</taxon>
        <taxon>Laurasiatheria</taxon>
        <taxon>Artiodactyla</taxon>
        <taxon>Ruminantia</taxon>
        <taxon>Pecora</taxon>
        <taxon>Bovidae</taxon>
        <taxon>Caprinae</taxon>
        <taxon>Ovis</taxon>
    </lineage>
</organism>
<accession>Q28560</accession>